<organism>
    <name type="scientific">Dictyostelium discoideum</name>
    <name type="common">Social amoeba</name>
    <dbReference type="NCBI Taxonomy" id="44689"/>
    <lineage>
        <taxon>Eukaryota</taxon>
        <taxon>Amoebozoa</taxon>
        <taxon>Evosea</taxon>
        <taxon>Eumycetozoa</taxon>
        <taxon>Dictyostelia</taxon>
        <taxon>Dictyosteliales</taxon>
        <taxon>Dictyosteliaceae</taxon>
        <taxon>Dictyostelium</taxon>
    </lineage>
</organism>
<reference key="1">
    <citation type="journal article" date="2005" name="Nature">
        <title>The genome of the social amoeba Dictyostelium discoideum.</title>
        <authorList>
            <person name="Eichinger L."/>
            <person name="Pachebat J.A."/>
            <person name="Gloeckner G."/>
            <person name="Rajandream M.A."/>
            <person name="Sucgang R."/>
            <person name="Berriman M."/>
            <person name="Song J."/>
            <person name="Olsen R."/>
            <person name="Szafranski K."/>
            <person name="Xu Q."/>
            <person name="Tunggal B."/>
            <person name="Kummerfeld S."/>
            <person name="Madera M."/>
            <person name="Konfortov B.A."/>
            <person name="Rivero F."/>
            <person name="Bankier A.T."/>
            <person name="Lehmann R."/>
            <person name="Hamlin N."/>
            <person name="Davies R."/>
            <person name="Gaudet P."/>
            <person name="Fey P."/>
            <person name="Pilcher K."/>
            <person name="Chen G."/>
            <person name="Saunders D."/>
            <person name="Sodergren E.J."/>
            <person name="Davis P."/>
            <person name="Kerhornou A."/>
            <person name="Nie X."/>
            <person name="Hall N."/>
            <person name="Anjard C."/>
            <person name="Hemphill L."/>
            <person name="Bason N."/>
            <person name="Farbrother P."/>
            <person name="Desany B."/>
            <person name="Just E."/>
            <person name="Morio T."/>
            <person name="Rost R."/>
            <person name="Churcher C.M."/>
            <person name="Cooper J."/>
            <person name="Haydock S."/>
            <person name="van Driessche N."/>
            <person name="Cronin A."/>
            <person name="Goodhead I."/>
            <person name="Muzny D.M."/>
            <person name="Mourier T."/>
            <person name="Pain A."/>
            <person name="Lu M."/>
            <person name="Harper D."/>
            <person name="Lindsay R."/>
            <person name="Hauser H."/>
            <person name="James K.D."/>
            <person name="Quiles M."/>
            <person name="Madan Babu M."/>
            <person name="Saito T."/>
            <person name="Buchrieser C."/>
            <person name="Wardroper A."/>
            <person name="Felder M."/>
            <person name="Thangavelu M."/>
            <person name="Johnson D."/>
            <person name="Knights A."/>
            <person name="Loulseged H."/>
            <person name="Mungall K.L."/>
            <person name="Oliver K."/>
            <person name="Price C."/>
            <person name="Quail M.A."/>
            <person name="Urushihara H."/>
            <person name="Hernandez J."/>
            <person name="Rabbinowitsch E."/>
            <person name="Steffen D."/>
            <person name="Sanders M."/>
            <person name="Ma J."/>
            <person name="Kohara Y."/>
            <person name="Sharp S."/>
            <person name="Simmonds M.N."/>
            <person name="Spiegler S."/>
            <person name="Tivey A."/>
            <person name="Sugano S."/>
            <person name="White B."/>
            <person name="Walker D."/>
            <person name="Woodward J.R."/>
            <person name="Winckler T."/>
            <person name="Tanaka Y."/>
            <person name="Shaulsky G."/>
            <person name="Schleicher M."/>
            <person name="Weinstock G.M."/>
            <person name="Rosenthal A."/>
            <person name="Cox E.C."/>
            <person name="Chisholm R.L."/>
            <person name="Gibbs R.A."/>
            <person name="Loomis W.F."/>
            <person name="Platzer M."/>
            <person name="Kay R.R."/>
            <person name="Williams J.G."/>
            <person name="Dear P.H."/>
            <person name="Noegel A.A."/>
            <person name="Barrell B.G."/>
            <person name="Kuspa A."/>
        </authorList>
    </citation>
    <scope>NUCLEOTIDE SEQUENCE [LARGE SCALE GENOMIC DNA]</scope>
    <source>
        <strain>AX4</strain>
    </source>
</reference>
<accession>Q54VK3</accession>
<evidence type="ECO:0000250" key="1">
    <source>
        <dbReference type="UniProtKB" id="Q75QN2"/>
    </source>
</evidence>
<evidence type="ECO:0000305" key="2"/>
<keyword id="KW-0158">Chromosome</keyword>
<keyword id="KW-0539">Nucleus</keyword>
<keyword id="KW-1185">Reference proteome</keyword>
<gene>
    <name type="ORF">DDB_G0280285</name>
</gene>
<proteinExistence type="inferred from homology"/>
<name>INT8_DICDI</name>
<sequence>MNKIFGVKIDSQQKKRQQSNKNLTVFNNGRYLIYIGDIHFDRKFHREALRYYLLGCGLETAFYSDPVKTSVTNSKYLTFLSRRIFDCFYFLRAPMQAIVVSQFFGNLNQTCLVSFKIIQEEYYQLDTNYFQYIWELPLLEILLTTFTKQKDLKKIYLINQIISNPIINENNHPDIRKNFIKNTKHNFWKAISSNYLLQ</sequence>
<comment type="function">
    <text evidence="1">Component of the integrator complex, a multiprotein complex that terminates RNA polymerase II (Pol II) transcription in the promoter-proximal region of genes. The integrator complex provides a quality checkpoint during transcription elongation by driving premature transcription termination of transcripts that are unfavorably configured for transcriptional elongation: the complex terminates transcription by (1) catalyzing dephosphorylation of the C-terminal domain (CTD) of Pol II subunit polr2a, (2) degrading the exiting nascent RNA transcript via endonuclease activity and (3) promoting the release of Pol II from bound DNA. The integrator complex is also involved in terminating the synthesis of non-coding Pol II transcripts, such as enhancer RNAs (eRNAs), small nuclear RNAs (snRNAs), telomerase RNAs and long non-coding RNAs (lncRNAs). Within the integrator complex, INTS8 is required for the recruitment of protein phosphatase 2A (PP2A) to transcription pause-release checkpoint.</text>
</comment>
<comment type="subunit">
    <text evidence="1">Component of the Integrator complex. The core complex associates with protein phosphatase 2A subunits, to form the Integrator-PP2A (INTAC) complex.</text>
</comment>
<comment type="subcellular location">
    <subcellularLocation>
        <location evidence="1">Nucleus</location>
    </subcellularLocation>
    <subcellularLocation>
        <location evidence="1">Chromosome</location>
    </subcellularLocation>
    <text evidence="1">Associates with chromatin and transcription pause-release checkpoint.</text>
</comment>
<comment type="similarity">
    <text evidence="2">Belongs to the Integrator subunit 8 family.</text>
</comment>
<dbReference type="EMBL" id="AAFI02000035">
    <property type="protein sequence ID" value="EAL67369.1"/>
    <property type="molecule type" value="Genomic_DNA"/>
</dbReference>
<dbReference type="RefSeq" id="XP_641352.1">
    <property type="nucleotide sequence ID" value="XM_636260.1"/>
</dbReference>
<dbReference type="SMR" id="Q54VK3"/>
<dbReference type="STRING" id="44689.Q54VK3"/>
<dbReference type="PaxDb" id="44689-DDB0234102"/>
<dbReference type="EnsemblProtists" id="EAL67369">
    <property type="protein sequence ID" value="EAL67369"/>
    <property type="gene ID" value="DDB_G0280285"/>
</dbReference>
<dbReference type="GeneID" id="8622486"/>
<dbReference type="KEGG" id="ddi:DDB_G0280285"/>
<dbReference type="dictyBase" id="DDB_G0280285"/>
<dbReference type="VEuPathDB" id="AmoebaDB:DDB_G0280285"/>
<dbReference type="eggNOG" id="ENOG502RCDK">
    <property type="taxonomic scope" value="Eukaryota"/>
</dbReference>
<dbReference type="HOGENOM" id="CLU_1380336_0_0_1"/>
<dbReference type="InParanoid" id="Q54VK3"/>
<dbReference type="OMA" id="TNYFQYI"/>
<dbReference type="PhylomeDB" id="Q54VK3"/>
<dbReference type="PRO" id="PR:Q54VK3"/>
<dbReference type="Proteomes" id="UP000002195">
    <property type="component" value="Chromosome 3"/>
</dbReference>
<dbReference type="GO" id="GO:0005694">
    <property type="term" value="C:chromosome"/>
    <property type="evidence" value="ECO:0007669"/>
    <property type="project" value="UniProtKB-SubCell"/>
</dbReference>
<dbReference type="GO" id="GO:0160232">
    <property type="term" value="C:INTAC complex"/>
    <property type="evidence" value="ECO:0000250"/>
    <property type="project" value="UniProtKB"/>
</dbReference>
<dbReference type="GO" id="GO:0160240">
    <property type="term" value="P:RNA polymerase II transcription initiation surveillance"/>
    <property type="evidence" value="ECO:0000250"/>
    <property type="project" value="UniProtKB"/>
</dbReference>
<dbReference type="GO" id="GO:0034472">
    <property type="term" value="P:snRNA 3'-end processing"/>
    <property type="evidence" value="ECO:0007669"/>
    <property type="project" value="InterPro"/>
</dbReference>
<dbReference type="InterPro" id="IPR038751">
    <property type="entry name" value="Int8"/>
</dbReference>
<dbReference type="PANTHER" id="PTHR13350">
    <property type="entry name" value="INTEGRATOR COMPLEX SUBUNIT 8"/>
    <property type="match status" value="1"/>
</dbReference>
<dbReference type="PANTHER" id="PTHR13350:SF1">
    <property type="entry name" value="INTEGRATOR COMPLEX SUBUNIT 8"/>
    <property type="match status" value="1"/>
</dbReference>
<feature type="chain" id="PRO_0000344380" description="Integrator complex subunit 8-like protein">
    <location>
        <begin position="1"/>
        <end position="198"/>
    </location>
</feature>
<protein>
    <recommendedName>
        <fullName>Integrator complex subunit 8-like protein</fullName>
    </recommendedName>
</protein>